<protein>
    <recommendedName>
        <fullName>4-coumarate--CoA ligase</fullName>
        <shortName>4CL</shortName>
        <ecNumber>6.2.1.12</ecNumber>
    </recommendedName>
    <alternativeName>
        <fullName>4-coumaroyl-CoA synthase</fullName>
    </alternativeName>
</protein>
<dbReference type="EC" id="6.2.1.12"/>
<dbReference type="EMBL" id="AJ002398">
    <property type="protein sequence ID" value="CAA05380.1"/>
    <property type="molecule type" value="Genomic_DNA"/>
</dbReference>
<dbReference type="SMR" id="O54075"/>
<dbReference type="GO" id="GO:0016207">
    <property type="term" value="F:4-coumarate-CoA ligase activity"/>
    <property type="evidence" value="ECO:0007669"/>
    <property type="project" value="UniProtKB-EC"/>
</dbReference>
<dbReference type="GO" id="GO:0005524">
    <property type="term" value="F:ATP binding"/>
    <property type="evidence" value="ECO:0007669"/>
    <property type="project" value="UniProtKB-KW"/>
</dbReference>
<dbReference type="GO" id="GO:0009698">
    <property type="term" value="P:phenylpropanoid metabolic process"/>
    <property type="evidence" value="ECO:0007669"/>
    <property type="project" value="UniProtKB-KW"/>
</dbReference>
<dbReference type="Gene3D" id="3.30.300.30">
    <property type="match status" value="1"/>
</dbReference>
<dbReference type="Gene3D" id="3.40.50.12780">
    <property type="entry name" value="N-terminal domain of ligase-like"/>
    <property type="match status" value="1"/>
</dbReference>
<dbReference type="InterPro" id="IPR012743">
    <property type="entry name" value="4_coum_CoA_lig"/>
</dbReference>
<dbReference type="InterPro" id="IPR025110">
    <property type="entry name" value="AMP-bd_C"/>
</dbReference>
<dbReference type="InterPro" id="IPR045851">
    <property type="entry name" value="AMP-bd_C_sf"/>
</dbReference>
<dbReference type="InterPro" id="IPR000873">
    <property type="entry name" value="AMP-dep_synth/lig_dom"/>
</dbReference>
<dbReference type="InterPro" id="IPR042099">
    <property type="entry name" value="ANL_N_sf"/>
</dbReference>
<dbReference type="InterPro" id="IPR050237">
    <property type="entry name" value="ATP-dep_AMP-bd_enzyme"/>
</dbReference>
<dbReference type="NCBIfam" id="TIGR02372">
    <property type="entry name" value="4_coum_CoA_lig"/>
    <property type="match status" value="1"/>
</dbReference>
<dbReference type="PANTHER" id="PTHR43767">
    <property type="entry name" value="LONG-CHAIN-FATTY-ACID--COA LIGASE"/>
    <property type="match status" value="1"/>
</dbReference>
<dbReference type="PANTHER" id="PTHR43767:SF10">
    <property type="entry name" value="SURFACTIN SYNTHASE SUBUNIT 1"/>
    <property type="match status" value="1"/>
</dbReference>
<dbReference type="Pfam" id="PF00501">
    <property type="entry name" value="AMP-binding"/>
    <property type="match status" value="1"/>
</dbReference>
<dbReference type="Pfam" id="PF13193">
    <property type="entry name" value="AMP-binding_C"/>
    <property type="match status" value="1"/>
</dbReference>
<dbReference type="SUPFAM" id="SSF56801">
    <property type="entry name" value="Acetyl-CoA synthetase-like"/>
    <property type="match status" value="1"/>
</dbReference>
<sequence>MTAEGPLAPEDRVLDREAIGRLCVSLIAAEQQDLLREGRVGHHQMIGARLLTAGHPSPDDLLIDEDTLGLDSLLMLSLVTRVAGFFHLSDSNTEDYLLVRRRLGEWVDLIDHHHTLMGPKARFTFATSGSTAGPKPVTHSAAALLSEGQAIAKILTERPPEVRRVLSCVPAHHIYGFLWSCLFPSRRGLEAKQLANLSASGIMRHARSGDLVVGTPFIWEQFADLDYRLPGDVVGVTSGAPSTAETWRCASALGPARMLDIYGSTETGGIGWRERRDDPFRTLPDLACFHDTLSRLGRRLDLQDEIAWDKDGGFTILGRKDEILQVAGSNVSPAAVRDILLRNPRVRDAAVRLDGRRLKAVISVAEGADEAEIEIELRATAARHLPAPARPDRFLFATELPRTGAGKLADW</sequence>
<reference key="1">
    <citation type="journal article" date="1998" name="Biochim. Biophys. Acta">
        <title>Sequence, chromophore extraction and 3-D model of the photoactive yellow protein from Rhodobacter sphaeroides.</title>
        <authorList>
            <person name="Kort R."/>
            <person name="Phillips-Jones M.K."/>
            <person name="Van Aalten D.M.F."/>
            <person name="Haker A."/>
            <person name="Hoffer S.M."/>
            <person name="Hellingwerf K.J."/>
            <person name="Crielaard W."/>
        </authorList>
    </citation>
    <scope>NUCLEOTIDE SEQUENCE [GENOMIC DNA]</scope>
    <source>
        <strain>ATCC 17023 / DSM 158 / JCM 6121 / CCUG 31486 / LMG 2827 / NBRC 12203 / NCIMB 8253 / ATH 2.4.1.</strain>
    </source>
</reference>
<keyword id="KW-0067">ATP-binding</keyword>
<keyword id="KW-0436">Ligase</keyword>
<keyword id="KW-0547">Nucleotide-binding</keyword>
<keyword id="KW-0587">Phenylpropanoid metabolism</keyword>
<gene>
    <name type="primary">pcl</name>
</gene>
<evidence type="ECO:0000305" key="1"/>
<proteinExistence type="inferred from homology"/>
<accession>O54075</accession>
<comment type="function">
    <text>Converts p-coumaric acid into p-coumaryl CoA. This is necessary for the activation of the photoactive yellow protein (PYP) chromophore.</text>
</comment>
<comment type="catalytic activity">
    <reaction>
        <text>(E)-4-coumarate + ATP + CoA = (E)-4-coumaroyl-CoA + AMP + diphosphate</text>
        <dbReference type="Rhea" id="RHEA:19641"/>
        <dbReference type="ChEBI" id="CHEBI:12876"/>
        <dbReference type="ChEBI" id="CHEBI:30616"/>
        <dbReference type="ChEBI" id="CHEBI:33019"/>
        <dbReference type="ChEBI" id="CHEBI:57287"/>
        <dbReference type="ChEBI" id="CHEBI:85008"/>
        <dbReference type="ChEBI" id="CHEBI:456215"/>
        <dbReference type="EC" id="6.2.1.12"/>
    </reaction>
</comment>
<comment type="similarity">
    <text evidence="1">Belongs to the ATP-dependent AMP-binding enzyme family.</text>
</comment>
<comment type="caution">
    <text evidence="1">Although this was cloned from strain NCIB 8253 in 1998 it was not detected as part of the complete proteome when it was sequenced in 2005.</text>
</comment>
<organism>
    <name type="scientific">Cereibacter sphaeroides (strain ATCC 17023 / DSM 158 / JCM 6121 / CCUG 31486 / LMG 2827 / NBRC 12203 / NCIMB 8253 / ATH 2.4.1.)</name>
    <name type="common">Rhodobacter sphaeroides</name>
    <dbReference type="NCBI Taxonomy" id="272943"/>
    <lineage>
        <taxon>Bacteria</taxon>
        <taxon>Pseudomonadati</taxon>
        <taxon>Pseudomonadota</taxon>
        <taxon>Alphaproteobacteria</taxon>
        <taxon>Rhodobacterales</taxon>
        <taxon>Paracoccaceae</taxon>
        <taxon>Cereibacter</taxon>
    </lineage>
</organism>
<feature type="chain" id="PRO_0000193045" description="4-coumarate--CoA ligase">
    <location>
        <begin position="1"/>
        <end position="411"/>
    </location>
</feature>
<name>PCL_CERS4</name>